<comment type="catalytic activity">
    <reaction>
        <text>Eliminative cleavage of (1-&gt;4)-alpha-D-galacturonan to give oligosaccharides with 4-deoxy-alpha-D-galact-4-enuronosyl groups at their non-reducing ends.</text>
        <dbReference type="EC" id="4.2.2.2"/>
    </reaction>
</comment>
<comment type="cofactor">
    <cofactor evidence="1">
        <name>Ca(2+)</name>
        <dbReference type="ChEBI" id="CHEBI:29108"/>
    </cofactor>
    <text evidence="1">Binds 1 Ca(2+) ion. Required for its activity.</text>
</comment>
<comment type="pathway">
    <text>Glycan metabolism; pectin degradation; 2-dehydro-3-deoxy-D-gluconate from pectin: step 2/5.</text>
</comment>
<comment type="similarity">
    <text evidence="3">Belongs to the polysaccharide lyase 1 family.</text>
</comment>
<keyword id="KW-0106">Calcium</keyword>
<keyword id="KW-0325">Glycoprotein</keyword>
<keyword id="KW-0456">Lyase</keyword>
<keyword id="KW-0479">Metal-binding</keyword>
<keyword id="KW-1185">Reference proteome</keyword>
<keyword id="KW-0732">Signal</keyword>
<sequence>MSIVCTFFLFLLNTSFAFAFAIPKPPIVRRLSTTVTSNSTASSCSANGNPIDECWRCDENWKDNRKNLADCAVGFGRDSIGGRAGEFYTVTDSGDDNPLNPTPGTLRYAATQDQPLWIIFDRDMVIQLKQDLQVASYKTIDGRGNNVQIAYGPCLTLYKVSNIIINNLYIHDCVPVKRNALSSLGGYSDGDGISIFESRDIWIDHCTLEKCYDGLIDAVNGSTDITISNSYMLNHNEVMLLGHSDEYSGDRDMRVTIAFNYFGEGLVQRMPRCRHGYFHIVNNIYRDWKMYAIGGSANPTIFSQGNVFIASNNQFTKEVTKRESADGDEEWKEWNWKSEGDEMVNGAFFTPSGKEDSPSYAKFSSMVARPASLLKTTHPSVGVLSCEIDQAC</sequence>
<accession>Q9FM66</accession>
<protein>
    <recommendedName>
        <fullName>Putative pectate lyase 21</fullName>
        <ecNumber>4.2.2.2</ecNumber>
    </recommendedName>
</protein>
<dbReference type="EC" id="4.2.2.2"/>
<dbReference type="EMBL" id="AB009050">
    <property type="protein sequence ID" value="BAB09239.1"/>
    <property type="molecule type" value="Genomic_DNA"/>
</dbReference>
<dbReference type="EMBL" id="CP002688">
    <property type="protein sequence ID" value="AED96672.1"/>
    <property type="molecule type" value="Genomic_DNA"/>
</dbReference>
<dbReference type="RefSeq" id="NP_200383.1">
    <property type="nucleotide sequence ID" value="NM_124954.3"/>
</dbReference>
<dbReference type="SMR" id="Q9FM66"/>
<dbReference type="FunCoup" id="Q9FM66">
    <property type="interactions" value="107"/>
</dbReference>
<dbReference type="STRING" id="3702.Q9FM66"/>
<dbReference type="CAZy" id="PL1">
    <property type="family name" value="Polysaccharide Lyase Family 1"/>
</dbReference>
<dbReference type="GlyGen" id="Q9FM66">
    <property type="glycosylation" value="3 sites"/>
</dbReference>
<dbReference type="PaxDb" id="3702-AT5G55720.1"/>
<dbReference type="ProteomicsDB" id="236570"/>
<dbReference type="EnsemblPlants" id="AT5G55720.1">
    <property type="protein sequence ID" value="AT5G55720.1"/>
    <property type="gene ID" value="AT5G55720"/>
</dbReference>
<dbReference type="GeneID" id="835666"/>
<dbReference type="Gramene" id="AT5G55720.1">
    <property type="protein sequence ID" value="AT5G55720.1"/>
    <property type="gene ID" value="AT5G55720"/>
</dbReference>
<dbReference type="KEGG" id="ath:AT5G55720"/>
<dbReference type="Araport" id="AT5G55720"/>
<dbReference type="TAIR" id="AT5G55720"/>
<dbReference type="eggNOG" id="ENOG502QS04">
    <property type="taxonomic scope" value="Eukaryota"/>
</dbReference>
<dbReference type="HOGENOM" id="CLU_026608_0_1_1"/>
<dbReference type="InParanoid" id="Q9FM66"/>
<dbReference type="OMA" id="TGWEMYA"/>
<dbReference type="PhylomeDB" id="Q9FM66"/>
<dbReference type="BioCyc" id="ARA:AT5G55720-MONOMER"/>
<dbReference type="UniPathway" id="UPA00545">
    <property type="reaction ID" value="UER00824"/>
</dbReference>
<dbReference type="PRO" id="PR:Q9FM66"/>
<dbReference type="Proteomes" id="UP000006548">
    <property type="component" value="Chromosome 5"/>
</dbReference>
<dbReference type="ExpressionAtlas" id="Q9FM66">
    <property type="expression patterns" value="baseline and differential"/>
</dbReference>
<dbReference type="GO" id="GO:0046872">
    <property type="term" value="F:metal ion binding"/>
    <property type="evidence" value="ECO:0007669"/>
    <property type="project" value="UniProtKB-KW"/>
</dbReference>
<dbReference type="GO" id="GO:0030570">
    <property type="term" value="F:pectate lyase activity"/>
    <property type="evidence" value="ECO:0007669"/>
    <property type="project" value="UniProtKB-EC"/>
</dbReference>
<dbReference type="GO" id="GO:0045490">
    <property type="term" value="P:pectin catabolic process"/>
    <property type="evidence" value="ECO:0007669"/>
    <property type="project" value="UniProtKB-UniPathway"/>
</dbReference>
<dbReference type="Gene3D" id="2.160.20.10">
    <property type="entry name" value="Single-stranded right-handed beta-helix, Pectin lyase-like"/>
    <property type="match status" value="1"/>
</dbReference>
<dbReference type="InterPro" id="IPR018082">
    <property type="entry name" value="AmbAllergen"/>
</dbReference>
<dbReference type="InterPro" id="IPR002022">
    <property type="entry name" value="Pec_lyase"/>
</dbReference>
<dbReference type="InterPro" id="IPR012334">
    <property type="entry name" value="Pectin_lyas_fold"/>
</dbReference>
<dbReference type="InterPro" id="IPR011050">
    <property type="entry name" value="Pectin_lyase_fold/virulence"/>
</dbReference>
<dbReference type="InterPro" id="IPR045032">
    <property type="entry name" value="PEL"/>
</dbReference>
<dbReference type="PANTHER" id="PTHR31683">
    <property type="entry name" value="PECTATE LYASE 18-RELATED"/>
    <property type="match status" value="1"/>
</dbReference>
<dbReference type="PANTHER" id="PTHR31683:SF18">
    <property type="entry name" value="PECTATE LYASE 21-RELATED"/>
    <property type="match status" value="1"/>
</dbReference>
<dbReference type="Pfam" id="PF00544">
    <property type="entry name" value="Pectate_lyase_4"/>
    <property type="match status" value="1"/>
</dbReference>
<dbReference type="PRINTS" id="PR00807">
    <property type="entry name" value="AMBALLERGEN"/>
</dbReference>
<dbReference type="SMART" id="SM00656">
    <property type="entry name" value="Amb_all"/>
    <property type="match status" value="1"/>
</dbReference>
<dbReference type="SUPFAM" id="SSF51126">
    <property type="entry name" value="Pectin lyase-like"/>
    <property type="match status" value="1"/>
</dbReference>
<reference key="1">
    <citation type="journal article" date="1998" name="DNA Res.">
        <title>Structural analysis of Arabidopsis thaliana chromosome 5. IV. Sequence features of the regions of 1,456,315 bp covered by nineteen physically assigned P1 and TAC clones.</title>
        <authorList>
            <person name="Sato S."/>
            <person name="Kaneko T."/>
            <person name="Kotani H."/>
            <person name="Nakamura Y."/>
            <person name="Asamizu E."/>
            <person name="Miyajima N."/>
            <person name="Tabata S."/>
        </authorList>
    </citation>
    <scope>NUCLEOTIDE SEQUENCE [LARGE SCALE GENOMIC DNA]</scope>
    <source>
        <strain>cv. Columbia</strain>
    </source>
</reference>
<reference key="2">
    <citation type="journal article" date="2017" name="Plant J.">
        <title>Araport11: a complete reannotation of the Arabidopsis thaliana reference genome.</title>
        <authorList>
            <person name="Cheng C.Y."/>
            <person name="Krishnakumar V."/>
            <person name="Chan A.P."/>
            <person name="Thibaud-Nissen F."/>
            <person name="Schobel S."/>
            <person name="Town C.D."/>
        </authorList>
    </citation>
    <scope>GENOME REANNOTATION</scope>
    <source>
        <strain>cv. Columbia</strain>
    </source>
</reference>
<organism>
    <name type="scientific">Arabidopsis thaliana</name>
    <name type="common">Mouse-ear cress</name>
    <dbReference type="NCBI Taxonomy" id="3702"/>
    <lineage>
        <taxon>Eukaryota</taxon>
        <taxon>Viridiplantae</taxon>
        <taxon>Streptophyta</taxon>
        <taxon>Embryophyta</taxon>
        <taxon>Tracheophyta</taxon>
        <taxon>Spermatophyta</taxon>
        <taxon>Magnoliopsida</taxon>
        <taxon>eudicotyledons</taxon>
        <taxon>Gunneridae</taxon>
        <taxon>Pentapetalae</taxon>
        <taxon>rosids</taxon>
        <taxon>malvids</taxon>
        <taxon>Brassicales</taxon>
        <taxon>Brassicaceae</taxon>
        <taxon>Camelineae</taxon>
        <taxon>Arabidopsis</taxon>
    </lineage>
</organism>
<evidence type="ECO:0000250" key="1"/>
<evidence type="ECO:0000255" key="2"/>
<evidence type="ECO:0000305" key="3"/>
<name>PLY21_ARATH</name>
<feature type="signal peptide" evidence="2">
    <location>
        <begin position="1"/>
        <end position="21"/>
    </location>
</feature>
<feature type="chain" id="PRO_0000024886" description="Putative pectate lyase 21">
    <location>
        <begin position="22"/>
        <end position="392"/>
    </location>
</feature>
<feature type="active site" evidence="2">
    <location>
        <position position="269"/>
    </location>
</feature>
<feature type="binding site" evidence="1">
    <location>
        <position position="189"/>
    </location>
    <ligand>
        <name>Ca(2+)</name>
        <dbReference type="ChEBI" id="CHEBI:29108"/>
    </ligand>
</feature>
<feature type="binding site" evidence="1">
    <location>
        <position position="213"/>
    </location>
    <ligand>
        <name>Ca(2+)</name>
        <dbReference type="ChEBI" id="CHEBI:29108"/>
    </ligand>
</feature>
<feature type="binding site" evidence="1">
    <location>
        <position position="217"/>
    </location>
    <ligand>
        <name>Ca(2+)</name>
        <dbReference type="ChEBI" id="CHEBI:29108"/>
    </ligand>
</feature>
<feature type="glycosylation site" description="N-linked (GlcNAc...) asparagine" evidence="2">
    <location>
        <position position="38"/>
    </location>
</feature>
<feature type="glycosylation site" description="N-linked (GlcNAc...) asparagine" evidence="2">
    <location>
        <position position="220"/>
    </location>
</feature>
<gene>
    <name type="ordered locus">At5g55720</name>
    <name type="ORF">MDF20.16</name>
</gene>
<proteinExistence type="inferred from homology"/>